<gene>
    <name evidence="1" type="primary">truB</name>
    <name type="ordered locus">BOV_2079</name>
</gene>
<feature type="chain" id="PRO_1000084556" description="tRNA pseudouridine synthase B">
    <location>
        <begin position="1"/>
        <end position="324"/>
    </location>
</feature>
<feature type="region of interest" description="Disordered" evidence="2">
    <location>
        <begin position="87"/>
        <end position="107"/>
    </location>
</feature>
<feature type="active site" description="Nucleophile" evidence="1">
    <location>
        <position position="49"/>
    </location>
</feature>
<name>TRUB_BRUO2</name>
<evidence type="ECO:0000255" key="1">
    <source>
        <dbReference type="HAMAP-Rule" id="MF_01080"/>
    </source>
</evidence>
<evidence type="ECO:0000256" key="2">
    <source>
        <dbReference type="SAM" id="MobiDB-lite"/>
    </source>
</evidence>
<accession>A5VTB4</accession>
<proteinExistence type="inferred from homology"/>
<keyword id="KW-0413">Isomerase</keyword>
<keyword id="KW-0819">tRNA processing</keyword>
<reference key="1">
    <citation type="journal article" date="2009" name="PLoS ONE">
        <title>Genome degradation in Brucella ovis corresponds with narrowing of its host range and tissue tropism.</title>
        <authorList>
            <person name="Tsolis R.M."/>
            <person name="Seshadri R."/>
            <person name="Santos R.L."/>
            <person name="Sangari F.J."/>
            <person name="Lobo J.M."/>
            <person name="de Jong M.F."/>
            <person name="Ren Q."/>
            <person name="Myers G."/>
            <person name="Brinkac L.M."/>
            <person name="Nelson W.C."/>
            <person name="Deboy R.T."/>
            <person name="Angiuoli S."/>
            <person name="Khouri H."/>
            <person name="Dimitrov G."/>
            <person name="Robinson J.R."/>
            <person name="Mulligan S."/>
            <person name="Walker R.L."/>
            <person name="Elzer P.E."/>
            <person name="Hassan K.A."/>
            <person name="Paulsen I.T."/>
        </authorList>
    </citation>
    <scope>NUCLEOTIDE SEQUENCE [LARGE SCALE GENOMIC DNA]</scope>
    <source>
        <strain>ATCC 25840 / 63/290 / NCTC 10512</strain>
    </source>
</reference>
<organism>
    <name type="scientific">Brucella ovis (strain ATCC 25840 / 63/290 / NCTC 10512)</name>
    <dbReference type="NCBI Taxonomy" id="444178"/>
    <lineage>
        <taxon>Bacteria</taxon>
        <taxon>Pseudomonadati</taxon>
        <taxon>Pseudomonadota</taxon>
        <taxon>Alphaproteobacteria</taxon>
        <taxon>Hyphomicrobiales</taxon>
        <taxon>Brucellaceae</taxon>
        <taxon>Brucella/Ochrobactrum group</taxon>
        <taxon>Brucella</taxon>
    </lineage>
</organism>
<sequence>MARRGKKKGRPISGWVIFDKPKGMGSTEAVSKIKWLFSAEKAGHAGTLDPLASGMLPIALGEATKTVPYVMDGTKVYRFTVTWGEERSTDDLEGQPTKTSDKRPSREEVEALLPDYTGVISQVPPQFSAIKIDGERAYDLAREGETVEIPAREVEIDRLEIVGFPDADRTEFEVECSKGTYVRSLARDMGRDLGCYGHISDLRRVEVAPFTDEDMVTLAKLEAVWPPLPPKDEDGNVIEPAPRRDFSALDALVIDTGAALDCLPQVPLSDDQAQRVRLGNPVILRGRDAPLEADEACVTTRGKLLAIGYIEHGQFKPKRVFTAG</sequence>
<dbReference type="EC" id="5.4.99.25" evidence="1"/>
<dbReference type="EMBL" id="CP000708">
    <property type="protein sequence ID" value="ABQ61775.1"/>
    <property type="molecule type" value="Genomic_DNA"/>
</dbReference>
<dbReference type="RefSeq" id="WP_002965229.1">
    <property type="nucleotide sequence ID" value="NC_009505.1"/>
</dbReference>
<dbReference type="SMR" id="A5VTB4"/>
<dbReference type="GeneID" id="93017531"/>
<dbReference type="KEGG" id="bov:BOV_2079"/>
<dbReference type="HOGENOM" id="CLU_032087_0_3_5"/>
<dbReference type="PhylomeDB" id="A5VTB4"/>
<dbReference type="Proteomes" id="UP000006383">
    <property type="component" value="Chromosome I"/>
</dbReference>
<dbReference type="GO" id="GO:0003723">
    <property type="term" value="F:RNA binding"/>
    <property type="evidence" value="ECO:0007669"/>
    <property type="project" value="InterPro"/>
</dbReference>
<dbReference type="GO" id="GO:0160148">
    <property type="term" value="F:tRNA pseudouridine(55) synthase activity"/>
    <property type="evidence" value="ECO:0007669"/>
    <property type="project" value="UniProtKB-EC"/>
</dbReference>
<dbReference type="GO" id="GO:1990481">
    <property type="term" value="P:mRNA pseudouridine synthesis"/>
    <property type="evidence" value="ECO:0007669"/>
    <property type="project" value="TreeGrafter"/>
</dbReference>
<dbReference type="GO" id="GO:0031119">
    <property type="term" value="P:tRNA pseudouridine synthesis"/>
    <property type="evidence" value="ECO:0007669"/>
    <property type="project" value="UniProtKB-UniRule"/>
</dbReference>
<dbReference type="CDD" id="cd02573">
    <property type="entry name" value="PseudoU_synth_EcTruB"/>
    <property type="match status" value="1"/>
</dbReference>
<dbReference type="Gene3D" id="3.30.2350.10">
    <property type="entry name" value="Pseudouridine synthase"/>
    <property type="match status" value="1"/>
</dbReference>
<dbReference type="HAMAP" id="MF_01080">
    <property type="entry name" value="TruB_bact"/>
    <property type="match status" value="1"/>
</dbReference>
<dbReference type="InterPro" id="IPR020103">
    <property type="entry name" value="PsdUridine_synth_cat_dom_sf"/>
</dbReference>
<dbReference type="InterPro" id="IPR002501">
    <property type="entry name" value="PsdUridine_synth_N"/>
</dbReference>
<dbReference type="InterPro" id="IPR014780">
    <property type="entry name" value="tRNA_psdUridine_synth_TruB"/>
</dbReference>
<dbReference type="InterPro" id="IPR015240">
    <property type="entry name" value="tRNA_sdUridine_synth_fam1_C"/>
</dbReference>
<dbReference type="InterPro" id="IPR032819">
    <property type="entry name" value="TruB_C"/>
</dbReference>
<dbReference type="NCBIfam" id="TIGR00431">
    <property type="entry name" value="TruB"/>
    <property type="match status" value="1"/>
</dbReference>
<dbReference type="PANTHER" id="PTHR13767:SF2">
    <property type="entry name" value="PSEUDOURIDYLATE SYNTHASE TRUB1"/>
    <property type="match status" value="1"/>
</dbReference>
<dbReference type="PANTHER" id="PTHR13767">
    <property type="entry name" value="TRNA-PSEUDOURIDINE SYNTHASE"/>
    <property type="match status" value="1"/>
</dbReference>
<dbReference type="Pfam" id="PF09157">
    <property type="entry name" value="TruB-C_2"/>
    <property type="match status" value="1"/>
</dbReference>
<dbReference type="Pfam" id="PF16198">
    <property type="entry name" value="TruB_C_2"/>
    <property type="match status" value="1"/>
</dbReference>
<dbReference type="Pfam" id="PF01509">
    <property type="entry name" value="TruB_N"/>
    <property type="match status" value="1"/>
</dbReference>
<dbReference type="SUPFAM" id="SSF55120">
    <property type="entry name" value="Pseudouridine synthase"/>
    <property type="match status" value="1"/>
</dbReference>
<protein>
    <recommendedName>
        <fullName evidence="1">tRNA pseudouridine synthase B</fullName>
        <ecNumber evidence="1">5.4.99.25</ecNumber>
    </recommendedName>
    <alternativeName>
        <fullName evidence="1">tRNA pseudouridine(55) synthase</fullName>
        <shortName evidence="1">Psi55 synthase</shortName>
    </alternativeName>
    <alternativeName>
        <fullName evidence="1">tRNA pseudouridylate synthase</fullName>
    </alternativeName>
    <alternativeName>
        <fullName evidence="1">tRNA-uridine isomerase</fullName>
    </alternativeName>
</protein>
<comment type="function">
    <text evidence="1">Responsible for synthesis of pseudouridine from uracil-55 in the psi GC loop of transfer RNAs.</text>
</comment>
<comment type="catalytic activity">
    <reaction evidence="1">
        <text>uridine(55) in tRNA = pseudouridine(55) in tRNA</text>
        <dbReference type="Rhea" id="RHEA:42532"/>
        <dbReference type="Rhea" id="RHEA-COMP:10101"/>
        <dbReference type="Rhea" id="RHEA-COMP:10102"/>
        <dbReference type="ChEBI" id="CHEBI:65314"/>
        <dbReference type="ChEBI" id="CHEBI:65315"/>
        <dbReference type="EC" id="5.4.99.25"/>
    </reaction>
</comment>
<comment type="similarity">
    <text evidence="1">Belongs to the pseudouridine synthase TruB family. Type 1 subfamily.</text>
</comment>